<comment type="function">
    <text evidence="1">Catalyzes the hydrolysis of N-succinyl-L,L-diaminopimelic acid (SDAP), forming succinate and LL-2,6-diaminopimelate (DAP), an intermediate involved in the bacterial biosynthesis of lysine and meso-diaminopimelic acid, an essential component of bacterial cell walls.</text>
</comment>
<comment type="catalytic activity">
    <reaction evidence="1">
        <text>N-succinyl-(2S,6S)-2,6-diaminopimelate + H2O = (2S,6S)-2,6-diaminopimelate + succinate</text>
        <dbReference type="Rhea" id="RHEA:22608"/>
        <dbReference type="ChEBI" id="CHEBI:15377"/>
        <dbReference type="ChEBI" id="CHEBI:30031"/>
        <dbReference type="ChEBI" id="CHEBI:57609"/>
        <dbReference type="ChEBI" id="CHEBI:58087"/>
        <dbReference type="EC" id="3.5.1.18"/>
    </reaction>
</comment>
<comment type="cofactor">
    <cofactor evidence="1">
        <name>Zn(2+)</name>
        <dbReference type="ChEBI" id="CHEBI:29105"/>
    </cofactor>
    <cofactor evidence="1">
        <name>Co(2+)</name>
        <dbReference type="ChEBI" id="CHEBI:48828"/>
    </cofactor>
    <text evidence="1">Binds 2 Zn(2+) or Co(2+) ions per subunit.</text>
</comment>
<comment type="pathway">
    <text evidence="1">Amino-acid biosynthesis; L-lysine biosynthesis via DAP pathway; LL-2,6-diaminopimelate from (S)-tetrahydrodipicolinate (succinylase route): step 3/3.</text>
</comment>
<comment type="subunit">
    <text evidence="1">Homodimer.</text>
</comment>
<comment type="similarity">
    <text evidence="1">Belongs to the peptidase M20A family. DapE subfamily.</text>
</comment>
<gene>
    <name evidence="1" type="primary">dapE</name>
    <name type="ordered locus">ABO_1137</name>
</gene>
<dbReference type="EC" id="3.5.1.18" evidence="1"/>
<dbReference type="EMBL" id="AM286690">
    <property type="protein sequence ID" value="CAL16585.1"/>
    <property type="molecule type" value="Genomic_DNA"/>
</dbReference>
<dbReference type="RefSeq" id="WP_011588420.1">
    <property type="nucleotide sequence ID" value="NC_008260.1"/>
</dbReference>
<dbReference type="SMR" id="Q0VQG3"/>
<dbReference type="STRING" id="393595.ABO_1137"/>
<dbReference type="KEGG" id="abo:ABO_1137"/>
<dbReference type="eggNOG" id="COG0624">
    <property type="taxonomic scope" value="Bacteria"/>
</dbReference>
<dbReference type="HOGENOM" id="CLU_021802_4_0_6"/>
<dbReference type="OrthoDB" id="9809784at2"/>
<dbReference type="UniPathway" id="UPA00034">
    <property type="reaction ID" value="UER00021"/>
</dbReference>
<dbReference type="Proteomes" id="UP000008871">
    <property type="component" value="Chromosome"/>
</dbReference>
<dbReference type="GO" id="GO:0008777">
    <property type="term" value="F:acetylornithine deacetylase activity"/>
    <property type="evidence" value="ECO:0007669"/>
    <property type="project" value="TreeGrafter"/>
</dbReference>
<dbReference type="GO" id="GO:0050897">
    <property type="term" value="F:cobalt ion binding"/>
    <property type="evidence" value="ECO:0007669"/>
    <property type="project" value="UniProtKB-UniRule"/>
</dbReference>
<dbReference type="GO" id="GO:0009014">
    <property type="term" value="F:succinyl-diaminopimelate desuccinylase activity"/>
    <property type="evidence" value="ECO:0007669"/>
    <property type="project" value="UniProtKB-UniRule"/>
</dbReference>
<dbReference type="GO" id="GO:0008270">
    <property type="term" value="F:zinc ion binding"/>
    <property type="evidence" value="ECO:0007669"/>
    <property type="project" value="UniProtKB-UniRule"/>
</dbReference>
<dbReference type="GO" id="GO:0019877">
    <property type="term" value="P:diaminopimelate biosynthetic process"/>
    <property type="evidence" value="ECO:0007669"/>
    <property type="project" value="UniProtKB-UniRule"/>
</dbReference>
<dbReference type="GO" id="GO:0006526">
    <property type="term" value="P:L-arginine biosynthetic process"/>
    <property type="evidence" value="ECO:0007669"/>
    <property type="project" value="TreeGrafter"/>
</dbReference>
<dbReference type="GO" id="GO:0009089">
    <property type="term" value="P:lysine biosynthetic process via diaminopimelate"/>
    <property type="evidence" value="ECO:0007669"/>
    <property type="project" value="UniProtKB-UniRule"/>
</dbReference>
<dbReference type="CDD" id="cd03891">
    <property type="entry name" value="M20_DapE_proteobac"/>
    <property type="match status" value="1"/>
</dbReference>
<dbReference type="FunFam" id="3.30.70.360:FF:000011">
    <property type="entry name" value="Succinyl-diaminopimelate desuccinylase"/>
    <property type="match status" value="1"/>
</dbReference>
<dbReference type="FunFam" id="3.40.630.10:FF:000005">
    <property type="entry name" value="Succinyl-diaminopimelate desuccinylase"/>
    <property type="match status" value="1"/>
</dbReference>
<dbReference type="Gene3D" id="3.40.630.10">
    <property type="entry name" value="Zn peptidases"/>
    <property type="match status" value="2"/>
</dbReference>
<dbReference type="HAMAP" id="MF_01690">
    <property type="entry name" value="DapE"/>
    <property type="match status" value="1"/>
</dbReference>
<dbReference type="InterPro" id="IPR001261">
    <property type="entry name" value="ArgE/DapE_CS"/>
</dbReference>
<dbReference type="InterPro" id="IPR036264">
    <property type="entry name" value="Bact_exopeptidase_dim_dom"/>
</dbReference>
<dbReference type="InterPro" id="IPR005941">
    <property type="entry name" value="DapE_proteobac"/>
</dbReference>
<dbReference type="InterPro" id="IPR002933">
    <property type="entry name" value="Peptidase_M20"/>
</dbReference>
<dbReference type="InterPro" id="IPR011650">
    <property type="entry name" value="Peptidase_M20_dimer"/>
</dbReference>
<dbReference type="InterPro" id="IPR050072">
    <property type="entry name" value="Peptidase_M20A"/>
</dbReference>
<dbReference type="NCBIfam" id="TIGR01246">
    <property type="entry name" value="dapE_proteo"/>
    <property type="match status" value="1"/>
</dbReference>
<dbReference type="NCBIfam" id="NF009557">
    <property type="entry name" value="PRK13009.1"/>
    <property type="match status" value="1"/>
</dbReference>
<dbReference type="PANTHER" id="PTHR43808">
    <property type="entry name" value="ACETYLORNITHINE DEACETYLASE"/>
    <property type="match status" value="1"/>
</dbReference>
<dbReference type="PANTHER" id="PTHR43808:SF31">
    <property type="entry name" value="N-ACETYL-L-CITRULLINE DEACETYLASE"/>
    <property type="match status" value="1"/>
</dbReference>
<dbReference type="Pfam" id="PF07687">
    <property type="entry name" value="M20_dimer"/>
    <property type="match status" value="1"/>
</dbReference>
<dbReference type="Pfam" id="PF01546">
    <property type="entry name" value="Peptidase_M20"/>
    <property type="match status" value="1"/>
</dbReference>
<dbReference type="SUPFAM" id="SSF55031">
    <property type="entry name" value="Bacterial exopeptidase dimerisation domain"/>
    <property type="match status" value="1"/>
</dbReference>
<dbReference type="SUPFAM" id="SSF53187">
    <property type="entry name" value="Zn-dependent exopeptidases"/>
    <property type="match status" value="1"/>
</dbReference>
<dbReference type="PROSITE" id="PS00759">
    <property type="entry name" value="ARGE_DAPE_CPG2_2"/>
    <property type="match status" value="1"/>
</dbReference>
<sequence length="377" mass="41036">MSRTLDYTKELIRRASVTPEDQGCQAWIIEKLEVLGFKCETLWFEEVRNLWARRGTQGPVFAFAGHTDVVPTGDVTAWKYDPFTPTEEGDLLYGRGAADMKGSIAAMIVAMEDFIAAHPDHNGSLAFLITADEEGPSVNGTVKVVEHLQARQEHIDYCLVGEPSSTNTVGDVIKNGRRGSLGAKLTVKGIQGHVAYPHLARNPIHDVAPALAELSATEWDQGNDFFPATSFQISNINGGTGATNVIPGTCEIIFNFRFSTELTDAILRERVEAILDKHGLDYDLQWTLSGQPFLTDRGALVDAAVGAIRDVTELDTELSTAGGTSDGRFIAPTGTQVVELGPTNATIHKVDEHTSISELDTLTQIYQRLLQHLMTTG</sequence>
<feature type="chain" id="PRO_0000375458" description="Succinyl-diaminopimelate desuccinylase">
    <location>
        <begin position="1"/>
        <end position="377"/>
    </location>
</feature>
<feature type="active site" evidence="1">
    <location>
        <position position="68"/>
    </location>
</feature>
<feature type="active site" description="Proton acceptor" evidence="1">
    <location>
        <position position="133"/>
    </location>
</feature>
<feature type="binding site" evidence="1">
    <location>
        <position position="66"/>
    </location>
    <ligand>
        <name>Zn(2+)</name>
        <dbReference type="ChEBI" id="CHEBI:29105"/>
        <label>1</label>
    </ligand>
</feature>
<feature type="binding site" evidence="1">
    <location>
        <position position="99"/>
    </location>
    <ligand>
        <name>Zn(2+)</name>
        <dbReference type="ChEBI" id="CHEBI:29105"/>
        <label>1</label>
    </ligand>
</feature>
<feature type="binding site" evidence="1">
    <location>
        <position position="99"/>
    </location>
    <ligand>
        <name>Zn(2+)</name>
        <dbReference type="ChEBI" id="CHEBI:29105"/>
        <label>2</label>
    </ligand>
</feature>
<feature type="binding site" evidence="1">
    <location>
        <position position="134"/>
    </location>
    <ligand>
        <name>Zn(2+)</name>
        <dbReference type="ChEBI" id="CHEBI:29105"/>
        <label>2</label>
    </ligand>
</feature>
<feature type="binding site" evidence="1">
    <location>
        <position position="162"/>
    </location>
    <ligand>
        <name>Zn(2+)</name>
        <dbReference type="ChEBI" id="CHEBI:29105"/>
        <label>1</label>
    </ligand>
</feature>
<feature type="binding site" evidence="1">
    <location>
        <position position="348"/>
    </location>
    <ligand>
        <name>Zn(2+)</name>
        <dbReference type="ChEBI" id="CHEBI:29105"/>
        <label>2</label>
    </ligand>
</feature>
<organism>
    <name type="scientific">Alcanivorax borkumensis (strain ATCC 700651 / DSM 11573 / NCIMB 13689 / SK2)</name>
    <dbReference type="NCBI Taxonomy" id="393595"/>
    <lineage>
        <taxon>Bacteria</taxon>
        <taxon>Pseudomonadati</taxon>
        <taxon>Pseudomonadota</taxon>
        <taxon>Gammaproteobacteria</taxon>
        <taxon>Oceanospirillales</taxon>
        <taxon>Alcanivoracaceae</taxon>
        <taxon>Alcanivorax</taxon>
    </lineage>
</organism>
<keyword id="KW-0028">Amino-acid biosynthesis</keyword>
<keyword id="KW-0170">Cobalt</keyword>
<keyword id="KW-0220">Diaminopimelate biosynthesis</keyword>
<keyword id="KW-0378">Hydrolase</keyword>
<keyword id="KW-0457">Lysine biosynthesis</keyword>
<keyword id="KW-0479">Metal-binding</keyword>
<keyword id="KW-1185">Reference proteome</keyword>
<keyword id="KW-0862">Zinc</keyword>
<protein>
    <recommendedName>
        <fullName evidence="1">Succinyl-diaminopimelate desuccinylase</fullName>
        <shortName evidence="1">SDAP desuccinylase</shortName>
        <ecNumber evidence="1">3.5.1.18</ecNumber>
    </recommendedName>
    <alternativeName>
        <fullName evidence="1">N-succinyl-LL-2,6-diaminoheptanedioate amidohydrolase</fullName>
    </alternativeName>
</protein>
<accession>Q0VQG3</accession>
<reference key="1">
    <citation type="journal article" date="2006" name="Nat. Biotechnol.">
        <title>Genome sequence of the ubiquitous hydrocarbon-degrading marine bacterium Alcanivorax borkumensis.</title>
        <authorList>
            <person name="Schneiker S."/>
            <person name="Martins dos Santos V.A.P."/>
            <person name="Bartels D."/>
            <person name="Bekel T."/>
            <person name="Brecht M."/>
            <person name="Buhrmester J."/>
            <person name="Chernikova T.N."/>
            <person name="Denaro R."/>
            <person name="Ferrer M."/>
            <person name="Gertler C."/>
            <person name="Goesmann A."/>
            <person name="Golyshina O.V."/>
            <person name="Kaminski F."/>
            <person name="Khachane A.N."/>
            <person name="Lang S."/>
            <person name="Linke B."/>
            <person name="McHardy A.C."/>
            <person name="Meyer F."/>
            <person name="Nechitaylo T."/>
            <person name="Puehler A."/>
            <person name="Regenhardt D."/>
            <person name="Rupp O."/>
            <person name="Sabirova J.S."/>
            <person name="Selbitschka W."/>
            <person name="Yakimov M.M."/>
            <person name="Timmis K.N."/>
            <person name="Vorhoelter F.-J."/>
            <person name="Weidner S."/>
            <person name="Kaiser O."/>
            <person name="Golyshin P.N."/>
        </authorList>
    </citation>
    <scope>NUCLEOTIDE SEQUENCE [LARGE SCALE GENOMIC DNA]</scope>
    <source>
        <strain>ATCC 700651 / DSM 11573 / NCIMB 13689 / SK2</strain>
    </source>
</reference>
<proteinExistence type="inferred from homology"/>
<name>DAPE_ALCBS</name>
<evidence type="ECO:0000255" key="1">
    <source>
        <dbReference type="HAMAP-Rule" id="MF_01690"/>
    </source>
</evidence>